<name>PSAD_CUCSA</name>
<organism>
    <name type="scientific">Cucumis sativus</name>
    <name type="common">Cucumber</name>
    <dbReference type="NCBI Taxonomy" id="3659"/>
    <lineage>
        <taxon>Eukaryota</taxon>
        <taxon>Viridiplantae</taxon>
        <taxon>Streptophyta</taxon>
        <taxon>Embryophyta</taxon>
        <taxon>Tracheophyta</taxon>
        <taxon>Spermatophyta</taxon>
        <taxon>Magnoliopsida</taxon>
        <taxon>eudicotyledons</taxon>
        <taxon>Gunneridae</taxon>
        <taxon>Pentapetalae</taxon>
        <taxon>rosids</taxon>
        <taxon>fabids</taxon>
        <taxon>Cucurbitales</taxon>
        <taxon>Cucurbitaceae</taxon>
        <taxon>Benincaseae</taxon>
        <taxon>Cucumis</taxon>
    </lineage>
</organism>
<gene>
    <name type="primary">psaD</name>
</gene>
<feature type="transit peptide" description="Chloroplast" evidence="2">
    <location>
        <begin position="1"/>
        <end position="54"/>
    </location>
</feature>
<feature type="chain" id="PRO_0000029373" description="Photosystem I reaction center subunit II, chloroplastic">
    <location>
        <begin position="55"/>
        <end position="207"/>
    </location>
</feature>
<sequence>MAMATQATLFTPSLSTPKSTGISIPWKQSSTLSFLTSKPHLKAASSSRSFKVSAEAETSVEAPAGFSPPELDPSTPSPIFAGSTGGLLRKAQVEEFYVITWESPKEQIFEMPTGGAAIMREGPNLLKLARKEQCLALGTRLRSKYKIKYQFYRVFPNGEVQYLHPKDGVYPEKVNPGREGVGQNFRSIGKNVSPIEVKFTGKQVYDL</sequence>
<protein>
    <recommendedName>
        <fullName>Photosystem I reaction center subunit II, chloroplastic</fullName>
    </recommendedName>
    <alternativeName>
        <fullName>PS I subunit 5</fullName>
    </alternativeName>
    <alternativeName>
        <fullName>Photosystem I 20 kDa subunit</fullName>
        <shortName>PSI-D</shortName>
    </alternativeName>
</protein>
<dbReference type="PIR" id="A60695">
    <property type="entry name" value="A60695"/>
</dbReference>
<dbReference type="RefSeq" id="XP_004134141.1">
    <property type="nucleotide sequence ID" value="XM_004134093.2"/>
</dbReference>
<dbReference type="SMR" id="P32869"/>
<dbReference type="EnsemblPlants" id="KGN56995">
    <property type="protein sequence ID" value="KGN56995"/>
    <property type="gene ID" value="Csa_3G147780"/>
</dbReference>
<dbReference type="GeneID" id="101207214"/>
<dbReference type="Gramene" id="KGN56995">
    <property type="protein sequence ID" value="KGN56995"/>
    <property type="gene ID" value="Csa_3G147780"/>
</dbReference>
<dbReference type="KEGG" id="csv:101207214"/>
<dbReference type="eggNOG" id="ENOG502QQIC">
    <property type="taxonomic scope" value="Eukaryota"/>
</dbReference>
<dbReference type="OMA" id="IVPWKQS"/>
<dbReference type="OrthoDB" id="44at2759"/>
<dbReference type="GO" id="GO:0009535">
    <property type="term" value="C:chloroplast thylakoid membrane"/>
    <property type="evidence" value="ECO:0007669"/>
    <property type="project" value="UniProtKB-SubCell"/>
</dbReference>
<dbReference type="GO" id="GO:0009538">
    <property type="term" value="C:photosystem I reaction center"/>
    <property type="evidence" value="ECO:0007669"/>
    <property type="project" value="InterPro"/>
</dbReference>
<dbReference type="GO" id="GO:0015979">
    <property type="term" value="P:photosynthesis"/>
    <property type="evidence" value="ECO:0007669"/>
    <property type="project" value="UniProtKB-KW"/>
</dbReference>
<dbReference type="FunFam" id="3.30.1470.10:FF:000002">
    <property type="entry name" value="Photosystem I reaction center subunit II"/>
    <property type="match status" value="1"/>
</dbReference>
<dbReference type="Gene3D" id="3.30.1470.10">
    <property type="entry name" value="Photosystem I PsaD, reaction center subunit II"/>
    <property type="match status" value="1"/>
</dbReference>
<dbReference type="InterPro" id="IPR003685">
    <property type="entry name" value="PsaD"/>
</dbReference>
<dbReference type="InterPro" id="IPR036579">
    <property type="entry name" value="PsaD_sf"/>
</dbReference>
<dbReference type="PANTHER" id="PTHR31982:SF5">
    <property type="entry name" value="PHOTOSYSTEM I REACTION CENTER SUBUNIT II, CHLOROPLASTIC"/>
    <property type="match status" value="1"/>
</dbReference>
<dbReference type="PANTHER" id="PTHR31982">
    <property type="entry name" value="PHOTOSYSTEM I REACTION CENTER SUBUNIT II-1, CHLOROPLASTIC-RELATED"/>
    <property type="match status" value="1"/>
</dbReference>
<dbReference type="Pfam" id="PF02531">
    <property type="entry name" value="PsaD"/>
    <property type="match status" value="1"/>
</dbReference>
<dbReference type="SUPFAM" id="SSF64234">
    <property type="entry name" value="Photosystem I subunit PsaD"/>
    <property type="match status" value="1"/>
</dbReference>
<comment type="function">
    <text>PsaD can form complexes with ferredoxin and ferredoxin-oxidoreductase in photosystem I (PS I) reaction center. PSAD may encode the ferredoxin-docking protein.</text>
</comment>
<comment type="subcellular location">
    <subcellularLocation>
        <location evidence="1">Plastid</location>
        <location evidence="1">Chloroplast thylakoid membrane</location>
        <topology evidence="1">Peripheral membrane protein</topology>
        <orientation evidence="1">Stromal side</orientation>
    </subcellularLocation>
</comment>
<comment type="developmental stage">
    <text>Present in etiolated cotyledons; level increased during greening.</text>
</comment>
<comment type="similarity">
    <text evidence="3">Belongs to the PsaD family.</text>
</comment>
<accession>P32869</accession>
<proteinExistence type="evidence at protein level"/>
<reference key="1">
    <citation type="journal article" date="1990" name="Plant Cell Physiol.">
        <title>Sequencing and expression of the gene that encodes a 20-kDa polypeptide of the PS I complex from cucumber cotyledon.</title>
        <authorList>
            <person name="Iwasaki Y."/>
            <person name="Sasaki T."/>
            <person name="Takabe T."/>
        </authorList>
    </citation>
    <scope>NUCLEOTIDE SEQUENCE</scope>
    <scope>PROTEIN SEQUENCE OF 55-77</scope>
</reference>
<evidence type="ECO:0000250" key="1"/>
<evidence type="ECO:0000269" key="2">
    <source ref="1"/>
</evidence>
<evidence type="ECO:0000305" key="3"/>
<keyword id="KW-0150">Chloroplast</keyword>
<keyword id="KW-0903">Direct protein sequencing</keyword>
<keyword id="KW-0472">Membrane</keyword>
<keyword id="KW-0602">Photosynthesis</keyword>
<keyword id="KW-0603">Photosystem I</keyword>
<keyword id="KW-0934">Plastid</keyword>
<keyword id="KW-0793">Thylakoid</keyword>
<keyword id="KW-0809">Transit peptide</keyword>